<proteinExistence type="evidence at transcript level"/>
<keyword id="KW-1003">Cell membrane</keyword>
<keyword id="KW-1015">Disulfide bond</keyword>
<keyword id="KW-0297">G-protein coupled receptor</keyword>
<keyword id="KW-0325">Glycoprotein</keyword>
<keyword id="KW-0446">Lipid-binding</keyword>
<keyword id="KW-0472">Membrane</keyword>
<keyword id="KW-0675">Receptor</keyword>
<keyword id="KW-1185">Reference proteome</keyword>
<keyword id="KW-0807">Transducer</keyword>
<keyword id="KW-0812">Transmembrane</keyword>
<keyword id="KW-1133">Transmembrane helix</keyword>
<protein>
    <recommendedName>
        <fullName>Lysophosphatidic acid receptor 4</fullName>
        <shortName>LPA receptor 4</shortName>
        <shortName>LPA-4</shortName>
    </recommendedName>
    <alternativeName>
        <fullName>G-protein coupled receptor 23</fullName>
    </alternativeName>
    <alternativeName>
        <fullName>P2Y purinoceptor 9</fullName>
        <shortName>P2Y9</shortName>
    </alternativeName>
    <alternativeName>
        <fullName>Purinergic receptor 9</fullName>
    </alternativeName>
</protein>
<gene>
    <name type="primary">Lpar4</name>
    <name type="synonym">Gpr23</name>
    <name type="synonym">Lpa4</name>
    <name type="synonym">P2y9</name>
</gene>
<organism>
    <name type="scientific">Mus musculus</name>
    <name type="common">Mouse</name>
    <dbReference type="NCBI Taxonomy" id="10090"/>
    <lineage>
        <taxon>Eukaryota</taxon>
        <taxon>Metazoa</taxon>
        <taxon>Chordata</taxon>
        <taxon>Craniata</taxon>
        <taxon>Vertebrata</taxon>
        <taxon>Euteleostomi</taxon>
        <taxon>Mammalia</taxon>
        <taxon>Eutheria</taxon>
        <taxon>Euarchontoglires</taxon>
        <taxon>Glires</taxon>
        <taxon>Rodentia</taxon>
        <taxon>Myomorpha</taxon>
        <taxon>Muroidea</taxon>
        <taxon>Muridae</taxon>
        <taxon>Murinae</taxon>
        <taxon>Mus</taxon>
        <taxon>Mus</taxon>
    </lineage>
</organism>
<name>LPAR4_MOUSE</name>
<feature type="chain" id="PRO_0000250204" description="Lysophosphatidic acid receptor 4">
    <location>
        <begin position="1"/>
        <end position="370"/>
    </location>
</feature>
<feature type="topological domain" description="Extracellular" evidence="2">
    <location>
        <begin position="1"/>
        <end position="43"/>
    </location>
</feature>
<feature type="transmembrane region" description="Helical; Name=1" evidence="2">
    <location>
        <begin position="44"/>
        <end position="64"/>
    </location>
</feature>
<feature type="topological domain" description="Cytoplasmic" evidence="2">
    <location>
        <begin position="65"/>
        <end position="73"/>
    </location>
</feature>
<feature type="transmembrane region" description="Helical; Name=2" evidence="2">
    <location>
        <begin position="74"/>
        <end position="94"/>
    </location>
</feature>
<feature type="topological domain" description="Extracellular" evidence="2">
    <location>
        <begin position="95"/>
        <end position="112"/>
    </location>
</feature>
<feature type="transmembrane region" description="Helical; Name=3" evidence="2">
    <location>
        <begin position="113"/>
        <end position="133"/>
    </location>
</feature>
<feature type="topological domain" description="Cytoplasmic" evidence="2">
    <location>
        <begin position="134"/>
        <end position="155"/>
    </location>
</feature>
<feature type="transmembrane region" description="Helical; Name=4" evidence="2">
    <location>
        <begin position="156"/>
        <end position="176"/>
    </location>
</feature>
<feature type="topological domain" description="Extracellular" evidence="2">
    <location>
        <begin position="177"/>
        <end position="203"/>
    </location>
</feature>
<feature type="transmembrane region" description="Helical; Name=5" evidence="2">
    <location>
        <begin position="204"/>
        <end position="224"/>
    </location>
</feature>
<feature type="topological domain" description="Cytoplasmic" evidence="2">
    <location>
        <begin position="225"/>
        <end position="254"/>
    </location>
</feature>
<feature type="transmembrane region" description="Helical; Name=6" evidence="2">
    <location>
        <begin position="255"/>
        <end position="275"/>
    </location>
</feature>
<feature type="topological domain" description="Extracellular" evidence="2">
    <location>
        <begin position="276"/>
        <end position="294"/>
    </location>
</feature>
<feature type="transmembrane region" description="Helical; Name=7" evidence="2">
    <location>
        <begin position="295"/>
        <end position="315"/>
    </location>
</feature>
<feature type="topological domain" description="Cytoplasmic" evidence="2">
    <location>
        <begin position="316"/>
        <end position="370"/>
    </location>
</feature>
<feature type="glycosylation site" description="N-linked (GlcNAc...) asparagine" evidence="2">
    <location>
        <position position="15"/>
    </location>
</feature>
<feature type="glycosylation site" description="N-linked (GlcNAc...) asparagine" evidence="2">
    <location>
        <position position="24"/>
    </location>
</feature>
<feature type="glycosylation site" description="N-linked (GlcNAc...) asparagine" evidence="2">
    <location>
        <position position="28"/>
    </location>
</feature>
<feature type="glycosylation site" description="N-linked (GlcNAc...) asparagine" evidence="2">
    <location>
        <position position="183"/>
    </location>
</feature>
<feature type="disulfide bond" evidence="3">
    <location>
        <begin position="111"/>
        <end position="188"/>
    </location>
</feature>
<feature type="sequence conflict" description="In Ref. 1; BAC34729." evidence="4" ref="1">
    <original>A</original>
    <variation>T</variation>
    <location>
        <position position="27"/>
    </location>
</feature>
<feature type="sequence conflict" description="In Ref. 1; BAC32299." evidence="4" ref="1">
    <original>N</original>
    <variation>S</variation>
    <location>
        <position position="57"/>
    </location>
</feature>
<feature type="sequence conflict" description="In Ref. 1; BAC34729." evidence="4" ref="1">
    <original>S</original>
    <variation>N</variation>
    <location>
        <position position="168"/>
    </location>
</feature>
<accession>Q8BLG2</accession>
<accession>A2ADM5</accession>
<accession>Q8BKK1</accession>
<accession>Q8VE54</accession>
<dbReference type="EMBL" id="AK045289">
    <property type="protein sequence ID" value="BAC32299.1"/>
    <property type="molecule type" value="mRNA"/>
</dbReference>
<dbReference type="EMBL" id="AK051709">
    <property type="protein sequence ID" value="BAC34729.1"/>
    <property type="molecule type" value="mRNA"/>
</dbReference>
<dbReference type="EMBL" id="AL670943">
    <property type="status" value="NOT_ANNOTATED_CDS"/>
    <property type="molecule type" value="Genomic_DNA"/>
</dbReference>
<dbReference type="EMBL" id="CH466564">
    <property type="protein sequence ID" value="EDL14046.1"/>
    <property type="molecule type" value="Genomic_DNA"/>
</dbReference>
<dbReference type="EMBL" id="BC019743">
    <property type="protein sequence ID" value="AAH19743.1"/>
    <property type="molecule type" value="mRNA"/>
</dbReference>
<dbReference type="EMBL" id="BC138893">
    <property type="protein sequence ID" value="AAI38894.1"/>
    <property type="molecule type" value="mRNA"/>
</dbReference>
<dbReference type="EMBL" id="BC138894">
    <property type="protein sequence ID" value="AAI38895.1"/>
    <property type="molecule type" value="mRNA"/>
</dbReference>
<dbReference type="CCDS" id="CCDS30345.1"/>
<dbReference type="RefSeq" id="NP_780480.2">
    <property type="nucleotide sequence ID" value="NM_175271.4"/>
</dbReference>
<dbReference type="SMR" id="Q8BLG2"/>
<dbReference type="FunCoup" id="Q8BLG2">
    <property type="interactions" value="1341"/>
</dbReference>
<dbReference type="STRING" id="10090.ENSMUSP00000053986"/>
<dbReference type="BindingDB" id="Q8BLG2"/>
<dbReference type="ChEMBL" id="CHEMBL3321650"/>
<dbReference type="GuidetoPHARMACOLOGY" id="94"/>
<dbReference type="SwissLipids" id="SLP:000001576"/>
<dbReference type="GlyCosmos" id="Q8BLG2">
    <property type="glycosylation" value="4 sites, No reported glycans"/>
</dbReference>
<dbReference type="GlyGen" id="Q8BLG2">
    <property type="glycosylation" value="4 sites"/>
</dbReference>
<dbReference type="PhosphoSitePlus" id="Q8BLG2"/>
<dbReference type="PaxDb" id="10090-ENSMUSP00000053986"/>
<dbReference type="ProteomicsDB" id="292354"/>
<dbReference type="Antibodypedia" id="35263">
    <property type="antibodies" value="308 antibodies from 30 providers"/>
</dbReference>
<dbReference type="DNASU" id="78134"/>
<dbReference type="Ensembl" id="ENSMUST00000060576.8">
    <property type="protein sequence ID" value="ENSMUSP00000053986.8"/>
    <property type="gene ID" value="ENSMUSG00000049929.8"/>
</dbReference>
<dbReference type="GeneID" id="78134"/>
<dbReference type="KEGG" id="mmu:78134"/>
<dbReference type="UCSC" id="uc009ubx.2">
    <property type="organism name" value="mouse"/>
</dbReference>
<dbReference type="AGR" id="MGI:1925384"/>
<dbReference type="CTD" id="2846"/>
<dbReference type="MGI" id="MGI:1925384">
    <property type="gene designation" value="Lpar4"/>
</dbReference>
<dbReference type="VEuPathDB" id="HostDB:ENSMUSG00000049929"/>
<dbReference type="eggNOG" id="ENOG502QV8W">
    <property type="taxonomic scope" value="Eukaryota"/>
</dbReference>
<dbReference type="GeneTree" id="ENSGT01040000240444"/>
<dbReference type="HOGENOM" id="CLU_009579_8_2_1"/>
<dbReference type="InParanoid" id="Q8BLG2"/>
<dbReference type="OMA" id="TINSRHR"/>
<dbReference type="OrthoDB" id="5781782at2759"/>
<dbReference type="PhylomeDB" id="Q8BLG2"/>
<dbReference type="TreeFam" id="TF350009"/>
<dbReference type="Reactome" id="R-MMU-416476">
    <property type="pathway name" value="G alpha (q) signalling events"/>
</dbReference>
<dbReference type="Reactome" id="R-MMU-417957">
    <property type="pathway name" value="P2Y receptors"/>
</dbReference>
<dbReference type="BioGRID-ORCS" id="78134">
    <property type="hits" value="1 hit in 80 CRISPR screens"/>
</dbReference>
<dbReference type="PRO" id="PR:Q8BLG2"/>
<dbReference type="Proteomes" id="UP000000589">
    <property type="component" value="Chromosome X"/>
</dbReference>
<dbReference type="RNAct" id="Q8BLG2">
    <property type="molecule type" value="protein"/>
</dbReference>
<dbReference type="Bgee" id="ENSMUSG00000049929">
    <property type="expression patterns" value="Expressed in humerus cartilage element and 207 other cell types or tissues"/>
</dbReference>
<dbReference type="GO" id="GO:0016604">
    <property type="term" value="C:nuclear body"/>
    <property type="evidence" value="ECO:0007669"/>
    <property type="project" value="Ensembl"/>
</dbReference>
<dbReference type="GO" id="GO:0005886">
    <property type="term" value="C:plasma membrane"/>
    <property type="evidence" value="ECO:0000314"/>
    <property type="project" value="MGI"/>
</dbReference>
<dbReference type="GO" id="GO:0035727">
    <property type="term" value="F:lysophosphatidic acid binding"/>
    <property type="evidence" value="ECO:0000314"/>
    <property type="project" value="MGI"/>
</dbReference>
<dbReference type="GO" id="GO:0070915">
    <property type="term" value="F:lysophosphatidic acid receptor activity"/>
    <property type="evidence" value="ECO:0000314"/>
    <property type="project" value="MGI"/>
</dbReference>
<dbReference type="CDD" id="cd15155">
    <property type="entry name" value="7tmA_LPAR4"/>
    <property type="match status" value="1"/>
</dbReference>
<dbReference type="FunFam" id="1.20.1070.10:FF:000017">
    <property type="entry name" value="lysophosphatidic acid receptor 4"/>
    <property type="match status" value="1"/>
</dbReference>
<dbReference type="Gene3D" id="1.20.1070.10">
    <property type="entry name" value="Rhodopsin 7-helix transmembrane proteins"/>
    <property type="match status" value="1"/>
</dbReference>
<dbReference type="InterPro" id="IPR000276">
    <property type="entry name" value="GPCR_Rhodpsn"/>
</dbReference>
<dbReference type="InterPro" id="IPR017452">
    <property type="entry name" value="GPCR_Rhodpsn_7TM"/>
</dbReference>
<dbReference type="PANTHER" id="PTHR24232">
    <property type="entry name" value="G-PROTEIN COUPLED RECEPTOR"/>
    <property type="match status" value="1"/>
</dbReference>
<dbReference type="PANTHER" id="PTHR24232:SF41">
    <property type="entry name" value="LYSOPHOSPHATIDIC ACID RECEPTOR 4"/>
    <property type="match status" value="1"/>
</dbReference>
<dbReference type="Pfam" id="PF00001">
    <property type="entry name" value="7tm_1"/>
    <property type="match status" value="1"/>
</dbReference>
<dbReference type="PRINTS" id="PR00237">
    <property type="entry name" value="GPCRRHODOPSN"/>
</dbReference>
<dbReference type="PRINTS" id="PR01067">
    <property type="entry name" value="P2Y5ORPHANR"/>
</dbReference>
<dbReference type="SMART" id="SM01381">
    <property type="entry name" value="7TM_GPCR_Srsx"/>
    <property type="match status" value="1"/>
</dbReference>
<dbReference type="SUPFAM" id="SSF81321">
    <property type="entry name" value="Family A G protein-coupled receptor-like"/>
    <property type="match status" value="1"/>
</dbReference>
<dbReference type="PROSITE" id="PS00237">
    <property type="entry name" value="G_PROTEIN_RECEP_F1_1"/>
    <property type="match status" value="1"/>
</dbReference>
<dbReference type="PROSITE" id="PS50262">
    <property type="entry name" value="G_PROTEIN_RECEP_F1_2"/>
    <property type="match status" value="1"/>
</dbReference>
<evidence type="ECO:0000250" key="1"/>
<evidence type="ECO:0000255" key="2"/>
<evidence type="ECO:0000255" key="3">
    <source>
        <dbReference type="PROSITE-ProRule" id="PRU00521"/>
    </source>
</evidence>
<evidence type="ECO:0000305" key="4"/>
<comment type="function">
    <text evidence="1">Receptor for lysophosphatidic acid (LPA), a mediator of diverse cellular activities. Transduces a signal by increasing the intracellular calcium ions and by stimulating adenylyl cyclase activity. The rank order of potency for agonists of this receptor is 1-oleoyl- &gt; 1-stearoyl- &gt; 1-palmitoyl- &gt; 1-myristoyl- &gt; 1-alkyl- &gt; 1-alkenyl-LPA (By similarity).</text>
</comment>
<comment type="subcellular location">
    <subcellularLocation>
        <location>Cell membrane</location>
        <topology>Multi-pass membrane protein</topology>
    </subcellularLocation>
</comment>
<comment type="similarity">
    <text evidence="3">Belongs to the G-protein coupled receptor 1 family.</text>
</comment>
<reference key="1">
    <citation type="journal article" date="2005" name="Science">
        <title>The transcriptional landscape of the mammalian genome.</title>
        <authorList>
            <person name="Carninci P."/>
            <person name="Kasukawa T."/>
            <person name="Katayama S."/>
            <person name="Gough J."/>
            <person name="Frith M.C."/>
            <person name="Maeda N."/>
            <person name="Oyama R."/>
            <person name="Ravasi T."/>
            <person name="Lenhard B."/>
            <person name="Wells C."/>
            <person name="Kodzius R."/>
            <person name="Shimokawa K."/>
            <person name="Bajic V.B."/>
            <person name="Brenner S.E."/>
            <person name="Batalov S."/>
            <person name="Forrest A.R."/>
            <person name="Zavolan M."/>
            <person name="Davis M.J."/>
            <person name="Wilming L.G."/>
            <person name="Aidinis V."/>
            <person name="Allen J.E."/>
            <person name="Ambesi-Impiombato A."/>
            <person name="Apweiler R."/>
            <person name="Aturaliya R.N."/>
            <person name="Bailey T.L."/>
            <person name="Bansal M."/>
            <person name="Baxter L."/>
            <person name="Beisel K.W."/>
            <person name="Bersano T."/>
            <person name="Bono H."/>
            <person name="Chalk A.M."/>
            <person name="Chiu K.P."/>
            <person name="Choudhary V."/>
            <person name="Christoffels A."/>
            <person name="Clutterbuck D.R."/>
            <person name="Crowe M.L."/>
            <person name="Dalla E."/>
            <person name="Dalrymple B.P."/>
            <person name="de Bono B."/>
            <person name="Della Gatta G."/>
            <person name="di Bernardo D."/>
            <person name="Down T."/>
            <person name="Engstrom P."/>
            <person name="Fagiolini M."/>
            <person name="Faulkner G."/>
            <person name="Fletcher C.F."/>
            <person name="Fukushima T."/>
            <person name="Furuno M."/>
            <person name="Futaki S."/>
            <person name="Gariboldi M."/>
            <person name="Georgii-Hemming P."/>
            <person name="Gingeras T.R."/>
            <person name="Gojobori T."/>
            <person name="Green R.E."/>
            <person name="Gustincich S."/>
            <person name="Harbers M."/>
            <person name="Hayashi Y."/>
            <person name="Hensch T.K."/>
            <person name="Hirokawa N."/>
            <person name="Hill D."/>
            <person name="Huminiecki L."/>
            <person name="Iacono M."/>
            <person name="Ikeo K."/>
            <person name="Iwama A."/>
            <person name="Ishikawa T."/>
            <person name="Jakt M."/>
            <person name="Kanapin A."/>
            <person name="Katoh M."/>
            <person name="Kawasawa Y."/>
            <person name="Kelso J."/>
            <person name="Kitamura H."/>
            <person name="Kitano H."/>
            <person name="Kollias G."/>
            <person name="Krishnan S.P."/>
            <person name="Kruger A."/>
            <person name="Kummerfeld S.K."/>
            <person name="Kurochkin I.V."/>
            <person name="Lareau L.F."/>
            <person name="Lazarevic D."/>
            <person name="Lipovich L."/>
            <person name="Liu J."/>
            <person name="Liuni S."/>
            <person name="McWilliam S."/>
            <person name="Madan Babu M."/>
            <person name="Madera M."/>
            <person name="Marchionni L."/>
            <person name="Matsuda H."/>
            <person name="Matsuzawa S."/>
            <person name="Miki H."/>
            <person name="Mignone F."/>
            <person name="Miyake S."/>
            <person name="Morris K."/>
            <person name="Mottagui-Tabar S."/>
            <person name="Mulder N."/>
            <person name="Nakano N."/>
            <person name="Nakauchi H."/>
            <person name="Ng P."/>
            <person name="Nilsson R."/>
            <person name="Nishiguchi S."/>
            <person name="Nishikawa S."/>
            <person name="Nori F."/>
            <person name="Ohara O."/>
            <person name="Okazaki Y."/>
            <person name="Orlando V."/>
            <person name="Pang K.C."/>
            <person name="Pavan W.J."/>
            <person name="Pavesi G."/>
            <person name="Pesole G."/>
            <person name="Petrovsky N."/>
            <person name="Piazza S."/>
            <person name="Reed J."/>
            <person name="Reid J.F."/>
            <person name="Ring B.Z."/>
            <person name="Ringwald M."/>
            <person name="Rost B."/>
            <person name="Ruan Y."/>
            <person name="Salzberg S.L."/>
            <person name="Sandelin A."/>
            <person name="Schneider C."/>
            <person name="Schoenbach C."/>
            <person name="Sekiguchi K."/>
            <person name="Semple C.A."/>
            <person name="Seno S."/>
            <person name="Sessa L."/>
            <person name="Sheng Y."/>
            <person name="Shibata Y."/>
            <person name="Shimada H."/>
            <person name="Shimada K."/>
            <person name="Silva D."/>
            <person name="Sinclair B."/>
            <person name="Sperling S."/>
            <person name="Stupka E."/>
            <person name="Sugiura K."/>
            <person name="Sultana R."/>
            <person name="Takenaka Y."/>
            <person name="Taki K."/>
            <person name="Tammoja K."/>
            <person name="Tan S.L."/>
            <person name="Tang S."/>
            <person name="Taylor M.S."/>
            <person name="Tegner J."/>
            <person name="Teichmann S.A."/>
            <person name="Ueda H.R."/>
            <person name="van Nimwegen E."/>
            <person name="Verardo R."/>
            <person name="Wei C.L."/>
            <person name="Yagi K."/>
            <person name="Yamanishi H."/>
            <person name="Zabarovsky E."/>
            <person name="Zhu S."/>
            <person name="Zimmer A."/>
            <person name="Hide W."/>
            <person name="Bult C."/>
            <person name="Grimmond S.M."/>
            <person name="Teasdale R.D."/>
            <person name="Liu E.T."/>
            <person name="Brusic V."/>
            <person name="Quackenbush J."/>
            <person name="Wahlestedt C."/>
            <person name="Mattick J.S."/>
            <person name="Hume D.A."/>
            <person name="Kai C."/>
            <person name="Sasaki D."/>
            <person name="Tomaru Y."/>
            <person name="Fukuda S."/>
            <person name="Kanamori-Katayama M."/>
            <person name="Suzuki M."/>
            <person name="Aoki J."/>
            <person name="Arakawa T."/>
            <person name="Iida J."/>
            <person name="Imamura K."/>
            <person name="Itoh M."/>
            <person name="Kato T."/>
            <person name="Kawaji H."/>
            <person name="Kawagashira N."/>
            <person name="Kawashima T."/>
            <person name="Kojima M."/>
            <person name="Kondo S."/>
            <person name="Konno H."/>
            <person name="Nakano K."/>
            <person name="Ninomiya N."/>
            <person name="Nishio T."/>
            <person name="Okada M."/>
            <person name="Plessy C."/>
            <person name="Shibata K."/>
            <person name="Shiraki T."/>
            <person name="Suzuki S."/>
            <person name="Tagami M."/>
            <person name="Waki K."/>
            <person name="Watahiki A."/>
            <person name="Okamura-Oho Y."/>
            <person name="Suzuki H."/>
            <person name="Kawai J."/>
            <person name="Hayashizaki Y."/>
        </authorList>
    </citation>
    <scope>NUCLEOTIDE SEQUENCE [LARGE SCALE MRNA]</scope>
    <source>
        <strain>C57BL/6J</strain>
        <tissue>Embryo</tissue>
        <tissue>Spinal ganglion</tissue>
    </source>
</reference>
<reference key="2">
    <citation type="journal article" date="2009" name="PLoS Biol.">
        <title>Lineage-specific biology revealed by a finished genome assembly of the mouse.</title>
        <authorList>
            <person name="Church D.M."/>
            <person name="Goodstadt L."/>
            <person name="Hillier L.W."/>
            <person name="Zody M.C."/>
            <person name="Goldstein S."/>
            <person name="She X."/>
            <person name="Bult C.J."/>
            <person name="Agarwala R."/>
            <person name="Cherry J.L."/>
            <person name="DiCuccio M."/>
            <person name="Hlavina W."/>
            <person name="Kapustin Y."/>
            <person name="Meric P."/>
            <person name="Maglott D."/>
            <person name="Birtle Z."/>
            <person name="Marques A.C."/>
            <person name="Graves T."/>
            <person name="Zhou S."/>
            <person name="Teague B."/>
            <person name="Potamousis K."/>
            <person name="Churas C."/>
            <person name="Place M."/>
            <person name="Herschleb J."/>
            <person name="Runnheim R."/>
            <person name="Forrest D."/>
            <person name="Amos-Landgraf J."/>
            <person name="Schwartz D.C."/>
            <person name="Cheng Z."/>
            <person name="Lindblad-Toh K."/>
            <person name="Eichler E.E."/>
            <person name="Ponting C.P."/>
        </authorList>
    </citation>
    <scope>NUCLEOTIDE SEQUENCE [LARGE SCALE GENOMIC DNA]</scope>
    <source>
        <strain>C57BL/6J</strain>
    </source>
</reference>
<reference key="3">
    <citation type="submission" date="2005-07" db="EMBL/GenBank/DDBJ databases">
        <authorList>
            <person name="Mural R.J."/>
            <person name="Adams M.D."/>
            <person name="Myers E.W."/>
            <person name="Smith H.O."/>
            <person name="Venter J.C."/>
        </authorList>
    </citation>
    <scope>NUCLEOTIDE SEQUENCE [LARGE SCALE GENOMIC DNA]</scope>
</reference>
<reference key="4">
    <citation type="journal article" date="2004" name="Genome Res.">
        <title>The status, quality, and expansion of the NIH full-length cDNA project: the Mammalian Gene Collection (MGC).</title>
        <authorList>
            <consortium name="The MGC Project Team"/>
        </authorList>
    </citation>
    <scope>NUCLEOTIDE SEQUENCE [LARGE SCALE MRNA]</scope>
    <source>
        <strain>Czech II</strain>
        <tissue>Brain</tissue>
        <tissue>Mammary gland</tissue>
    </source>
</reference>
<sequence>MGDRRFIDFQFQDLNSSLRPRLGNATANNTCIVDDSFKYNLNGAVYSVVFILGLITNSASLFVFCFRMKMRSETAIFITNLALSDLLFVCTLPFKIFYNFNRHWPFGDTLCKISGTAFLTNIYGSMLFLTCISVDRFLAIVYPFRSRTIRTRRNSAIVCAGVWILVLSGGISASLFSTTNVNNATTTCFEGFSKRVWKTYLSKITIFIEVVGFIIPLILNVSCSSVVLRTLRKPATLSQIGTNKKKVLKMITVHMAVFVVCFVPYNSVLFLYALVRSQAITNCLLERFAKIMYPITLCLATLNCCFDPFIYYFTLESFQKSFYINTHIRMESLFKTETPLTPKPSLPAIQEEVSDQTTNNGGELMLESTF</sequence>